<protein>
    <recommendedName>
        <fullName evidence="9">Calcium-activated potassium channel subunit alpha-1a</fullName>
    </recommendedName>
    <alternativeName>
        <fullName evidence="10">BK channel</fullName>
    </alternativeName>
    <alternativeName>
        <fullName evidence="12">Potassium large conductance calcium-activated channel, subfamily M, alpha member 1a</fullName>
    </alternativeName>
    <alternativeName>
        <fullName evidence="12">Slo1a</fullName>
    </alternativeName>
    <alternativeName>
        <fullName evidence="9">Slowpoke homolog</fullName>
    </alternativeName>
</protein>
<accession>B7ZC96</accession>
<accession>A0A8M1NRK6</accession>
<gene>
    <name evidence="12" type="primary">kcnma1a</name>
</gene>
<comment type="function">
    <text evidence="2 7 8">Potassium channel activated by both membrane depolarization or increase in cytosolic Ca(2+) that mediates export of K(+) (PubMed:22139424). It is also activated by the concentration of cytosolic Mg(2+) (By similarity). Its activation dampens the excitatory events that elevate the cytosolic Ca(2+) concentration and/or depolarize the cell membrane (By similarity). It therefore contributes to repolarization of the membrane potential (By similarity). Involved in determining peripheral auditory sensitivity (PubMed:24803460).</text>
</comment>
<comment type="catalytic activity">
    <reaction evidence="6">
        <text>K(+)(in) = K(+)(out)</text>
        <dbReference type="Rhea" id="RHEA:29463"/>
        <dbReference type="ChEBI" id="CHEBI:29103"/>
    </reaction>
</comment>
<comment type="subunit">
    <text evidence="2">Homotetramer; which constitutes the calcium-activated potassium channel.</text>
</comment>
<comment type="subcellular location">
    <subcellularLocation>
        <location evidence="2">Cell membrane</location>
        <topology evidence="2">Multi-pass membrane protein</topology>
    </subcellularLocation>
</comment>
<comment type="developmental stage">
    <text evidence="7">Expressed during larval stages.</text>
</comment>
<comment type="domain">
    <text evidence="6 8">The calcium bowl constitutes one of the Ca(2+) sensors and probably acts as a Ca(2+)-binding site (PubMed:22139424). There are however other Ca(2+) sensor regions required for activation of the channel (PubMed:22139424).</text>
</comment>
<comment type="PTM">
    <text evidence="2">Phosphorylated.</text>
</comment>
<comment type="PTM">
    <text evidence="2">Palmitoylated.</text>
</comment>
<comment type="disruption phenotype">
    <text evidence="7">Morpholino knockdown causes circling phenotype characteristic of hearing and balance deficits (PubMed:24803460). Causes a dose-dependent increase in auditory threshold in hair cells; simultaneous knockdown of kcnma1b does not significantly increase auditory threshold (PubMed:24803460).</text>
</comment>
<comment type="similarity">
    <text evidence="9">Belongs to the potassium channel family. Calcium-activated (TC 1.A.1.3) subfamily. KCa1.1/KCNMA1 sub-subfamily.</text>
</comment>
<name>KCMA1_DANRE</name>
<reference evidence="11" key="1">
    <citation type="journal article" date="2013" name="Nature">
        <title>The zebrafish reference genome sequence and its relationship to the human genome.</title>
        <authorList>
            <person name="Howe K."/>
            <person name="Clark M.D."/>
            <person name="Torroja C.F."/>
            <person name="Torrance J."/>
            <person name="Berthelot C."/>
            <person name="Muffato M."/>
            <person name="Collins J.E."/>
            <person name="Humphray S."/>
            <person name="McLaren K."/>
            <person name="Matthews L."/>
            <person name="McLaren S."/>
            <person name="Sealy I."/>
            <person name="Caccamo M."/>
            <person name="Churcher C."/>
            <person name="Scott C."/>
            <person name="Barrett J.C."/>
            <person name="Koch R."/>
            <person name="Rauch G.J."/>
            <person name="White S."/>
            <person name="Chow W."/>
            <person name="Kilian B."/>
            <person name="Quintais L.T."/>
            <person name="Guerra-Assuncao J.A."/>
            <person name="Zhou Y."/>
            <person name="Gu Y."/>
            <person name="Yen J."/>
            <person name="Vogel J.H."/>
            <person name="Eyre T."/>
            <person name="Redmond S."/>
            <person name="Banerjee R."/>
            <person name="Chi J."/>
            <person name="Fu B."/>
            <person name="Langley E."/>
            <person name="Maguire S.F."/>
            <person name="Laird G.K."/>
            <person name="Lloyd D."/>
            <person name="Kenyon E."/>
            <person name="Donaldson S."/>
            <person name="Sehra H."/>
            <person name="Almeida-King J."/>
            <person name="Loveland J."/>
            <person name="Trevanion S."/>
            <person name="Jones M."/>
            <person name="Quail M."/>
            <person name="Willey D."/>
            <person name="Hunt A."/>
            <person name="Burton J."/>
            <person name="Sims S."/>
            <person name="McLay K."/>
            <person name="Plumb B."/>
            <person name="Davis J."/>
            <person name="Clee C."/>
            <person name="Oliver K."/>
            <person name="Clark R."/>
            <person name="Riddle C."/>
            <person name="Elliot D."/>
            <person name="Threadgold G."/>
            <person name="Harden G."/>
            <person name="Ware D."/>
            <person name="Begum S."/>
            <person name="Mortimore B."/>
            <person name="Kerry G."/>
            <person name="Heath P."/>
            <person name="Phillimore B."/>
            <person name="Tracey A."/>
            <person name="Corby N."/>
            <person name="Dunn M."/>
            <person name="Johnson C."/>
            <person name="Wood J."/>
            <person name="Clark S."/>
            <person name="Pelan S."/>
            <person name="Griffiths G."/>
            <person name="Smith M."/>
            <person name="Glithero R."/>
            <person name="Howden P."/>
            <person name="Barker N."/>
            <person name="Lloyd C."/>
            <person name="Stevens C."/>
            <person name="Harley J."/>
            <person name="Holt K."/>
            <person name="Panagiotidis G."/>
            <person name="Lovell J."/>
            <person name="Beasley H."/>
            <person name="Henderson C."/>
            <person name="Gordon D."/>
            <person name="Auger K."/>
            <person name="Wright D."/>
            <person name="Collins J."/>
            <person name="Raisen C."/>
            <person name="Dyer L."/>
            <person name="Leung K."/>
            <person name="Robertson L."/>
            <person name="Ambridge K."/>
            <person name="Leongamornlert D."/>
            <person name="McGuire S."/>
            <person name="Gilderthorp R."/>
            <person name="Griffiths C."/>
            <person name="Manthravadi D."/>
            <person name="Nichol S."/>
            <person name="Barker G."/>
            <person name="Whitehead S."/>
            <person name="Kay M."/>
            <person name="Brown J."/>
            <person name="Murnane C."/>
            <person name="Gray E."/>
            <person name="Humphries M."/>
            <person name="Sycamore N."/>
            <person name="Barker D."/>
            <person name="Saunders D."/>
            <person name="Wallis J."/>
            <person name="Babbage A."/>
            <person name="Hammond S."/>
            <person name="Mashreghi-Mohammadi M."/>
            <person name="Barr L."/>
            <person name="Martin S."/>
            <person name="Wray P."/>
            <person name="Ellington A."/>
            <person name="Matthews N."/>
            <person name="Ellwood M."/>
            <person name="Woodmansey R."/>
            <person name="Clark G."/>
            <person name="Cooper J."/>
            <person name="Tromans A."/>
            <person name="Grafham D."/>
            <person name="Skuce C."/>
            <person name="Pandian R."/>
            <person name="Andrews R."/>
            <person name="Harrison E."/>
            <person name="Kimberley A."/>
            <person name="Garnett J."/>
            <person name="Fosker N."/>
            <person name="Hall R."/>
            <person name="Garner P."/>
            <person name="Kelly D."/>
            <person name="Bird C."/>
            <person name="Palmer S."/>
            <person name="Gehring I."/>
            <person name="Berger A."/>
            <person name="Dooley C.M."/>
            <person name="Ersan-Urun Z."/>
            <person name="Eser C."/>
            <person name="Geiger H."/>
            <person name="Geisler M."/>
            <person name="Karotki L."/>
            <person name="Kirn A."/>
            <person name="Konantz J."/>
            <person name="Konantz M."/>
            <person name="Oberlander M."/>
            <person name="Rudolph-Geiger S."/>
            <person name="Teucke M."/>
            <person name="Lanz C."/>
            <person name="Raddatz G."/>
            <person name="Osoegawa K."/>
            <person name="Zhu B."/>
            <person name="Rapp A."/>
            <person name="Widaa S."/>
            <person name="Langford C."/>
            <person name="Yang F."/>
            <person name="Schuster S.C."/>
            <person name="Carter N.P."/>
            <person name="Harrow J."/>
            <person name="Ning Z."/>
            <person name="Herrero J."/>
            <person name="Searle S.M."/>
            <person name="Enright A."/>
            <person name="Geisler R."/>
            <person name="Plasterk R.H."/>
            <person name="Lee C."/>
            <person name="Westerfield M."/>
            <person name="de Jong P.J."/>
            <person name="Zon L.I."/>
            <person name="Postlethwait J.H."/>
            <person name="Nusslein-Volhard C."/>
            <person name="Hubbard T.J."/>
            <person name="Roest Crollius H."/>
            <person name="Rogers J."/>
            <person name="Stemple D.L."/>
        </authorList>
    </citation>
    <scope>NUCLEOTIDE SEQUENCE [LARGE SCALE GENOMIC DNA]</scope>
    <source>
        <strain evidence="11">Tuebingen</strain>
    </source>
</reference>
<reference evidence="9" key="2">
    <citation type="journal article" date="2014" name="J. Exp. Biol.">
        <title>Manipulation of BK channel expression is sufficient to alter auditory hair cell thresholds in larval zebrafish.</title>
        <authorList>
            <person name="Rohmann K.N."/>
            <person name="Tripp J.A."/>
            <person name="Genova R.M."/>
            <person name="Bass A.H."/>
        </authorList>
    </citation>
    <scope>FUNCTION</scope>
    <scope>DEVELOPMENTAL STAGE</scope>
    <scope>DISRUPTION PHENOTYPE</scope>
</reference>
<reference evidence="13" key="3">
    <citation type="journal article" date="2011" name="Nature">
        <title>Open structure of the Ca2+ gating ring in the high-conductance Ca2+-activated K+ channel.</title>
        <authorList>
            <person name="Yuan P."/>
            <person name="Leonetti M.D."/>
            <person name="Hsiung Y."/>
            <person name="MacKinnon R."/>
        </authorList>
    </citation>
    <scope>X-RAY CRYSTALLOGRAPHY (3.61 ANGSTROMS) OF 362-853 AND 888-1075 IN COMPLEX WITH CALCIUM</scope>
    <scope>FUNCTION</scope>
    <scope>DOMAIN</scope>
    <scope>MUTAGENESIS OF 854-SER--SER-888 AND 1076-HIS--CYS-1184</scope>
    <scope>TRANSPORTER ACTIVITY</scope>
</reference>
<dbReference type="EMBL" id="AL645926">
    <property type="status" value="NOT_ANNOTATED_CDS"/>
    <property type="molecule type" value="Genomic_DNA"/>
</dbReference>
<dbReference type="EMBL" id="AL954192">
    <property type="status" value="NOT_ANNOTATED_CDS"/>
    <property type="molecule type" value="Genomic_DNA"/>
</dbReference>
<dbReference type="EMBL" id="BX469897">
    <property type="status" value="NOT_ANNOTATED_CDS"/>
    <property type="molecule type" value="Genomic_DNA"/>
</dbReference>
<dbReference type="EMBL" id="CT025847">
    <property type="status" value="NOT_ANNOTATED_CDS"/>
    <property type="molecule type" value="Genomic_DNA"/>
</dbReference>
<dbReference type="RefSeq" id="NP_001139072.1">
    <property type="nucleotide sequence ID" value="NM_001145600.1"/>
</dbReference>
<dbReference type="PDB" id="3U6N">
    <property type="method" value="X-ray"/>
    <property type="resolution" value="3.61 A"/>
    <property type="chains" value="A/B/C/D/E/F/G/H=362-853, A/B/C/D/E/F/G/H=888-1075"/>
</dbReference>
<dbReference type="PDBsum" id="3U6N"/>
<dbReference type="SMR" id="B7ZC96"/>
<dbReference type="DIP" id="DIP-59437N"/>
<dbReference type="STRING" id="7955.ENSDARP00000118939"/>
<dbReference type="ABCD" id="B7ZC96">
    <property type="antibodies" value="1 sequenced antibody"/>
</dbReference>
<dbReference type="Ensembl" id="ENSDART00000143200">
    <property type="protein sequence ID" value="ENSDARP00000118939"/>
    <property type="gene ID" value="ENSDARG00000079840"/>
</dbReference>
<dbReference type="GeneID" id="568554"/>
<dbReference type="KEGG" id="dre:568554"/>
<dbReference type="AGR" id="ZFIN:ZDB-GENE-070202-9"/>
<dbReference type="CTD" id="568554"/>
<dbReference type="ZFIN" id="ZDB-GENE-070202-9">
    <property type="gene designation" value="kcnma1a"/>
</dbReference>
<dbReference type="eggNOG" id="KOG1420">
    <property type="taxonomic scope" value="Eukaryota"/>
</dbReference>
<dbReference type="HOGENOM" id="CLU_006846_0_0_1"/>
<dbReference type="OrthoDB" id="10035564at2759"/>
<dbReference type="EvolutionaryTrace" id="B7ZC96"/>
<dbReference type="PRO" id="PR:B7ZC96"/>
<dbReference type="Proteomes" id="UP000000437">
    <property type="component" value="Chromosome 13"/>
</dbReference>
<dbReference type="Bgee" id="ENSDARG00000079840">
    <property type="expression patterns" value="Expressed in retina and 16 other cell types or tissues"/>
</dbReference>
<dbReference type="ExpressionAtlas" id="B7ZC96">
    <property type="expression patterns" value="baseline"/>
</dbReference>
<dbReference type="GO" id="GO:0016020">
    <property type="term" value="C:membrane"/>
    <property type="evidence" value="ECO:0000314"/>
    <property type="project" value="UniProtKB"/>
</dbReference>
<dbReference type="GO" id="GO:0034702">
    <property type="term" value="C:monoatomic ion channel complex"/>
    <property type="evidence" value="ECO:0007669"/>
    <property type="project" value="UniProtKB-KW"/>
</dbReference>
<dbReference type="GO" id="GO:0045211">
    <property type="term" value="C:postsynaptic membrane"/>
    <property type="evidence" value="ECO:0000318"/>
    <property type="project" value="GO_Central"/>
</dbReference>
<dbReference type="GO" id="GO:0005509">
    <property type="term" value="F:calcium ion binding"/>
    <property type="evidence" value="ECO:0000314"/>
    <property type="project" value="UniProtKB"/>
</dbReference>
<dbReference type="GO" id="GO:0015269">
    <property type="term" value="F:calcium-activated potassium channel activity"/>
    <property type="evidence" value="ECO:0000314"/>
    <property type="project" value="UniProtKB"/>
</dbReference>
<dbReference type="GO" id="GO:0060072">
    <property type="term" value="F:large conductance calcium-activated potassium channel activity"/>
    <property type="evidence" value="ECO:0000318"/>
    <property type="project" value="GO_Central"/>
</dbReference>
<dbReference type="GO" id="GO:0071805">
    <property type="term" value="P:potassium ion transmembrane transport"/>
    <property type="evidence" value="ECO:0000314"/>
    <property type="project" value="UniProtKB"/>
</dbReference>
<dbReference type="GO" id="GO:0010996">
    <property type="term" value="P:response to auditory stimulus"/>
    <property type="evidence" value="ECO:0000315"/>
    <property type="project" value="ZFIN"/>
</dbReference>
<dbReference type="FunFam" id="3.40.50.720:FF:000005">
    <property type="entry name" value="calcium-activated potassium channel subunit alpha-1 isoform X6"/>
    <property type="match status" value="1"/>
</dbReference>
<dbReference type="FunFam" id="1.10.287.70:FF:000015">
    <property type="entry name" value="Calcium-activated potassium channel subunit alpha-1 isoform X7"/>
    <property type="match status" value="1"/>
</dbReference>
<dbReference type="Gene3D" id="1.10.287.70">
    <property type="match status" value="1"/>
</dbReference>
<dbReference type="Gene3D" id="3.40.50.720">
    <property type="entry name" value="NAD(P)-binding Rossmann-like Domain"/>
    <property type="match status" value="2"/>
</dbReference>
<dbReference type="InterPro" id="IPR005821">
    <property type="entry name" value="Ion_trans_dom"/>
</dbReference>
<dbReference type="InterPro" id="IPR003929">
    <property type="entry name" value="K_chnl_BK_asu"/>
</dbReference>
<dbReference type="InterPro" id="IPR047871">
    <property type="entry name" value="K_chnl_Slo-like"/>
</dbReference>
<dbReference type="InterPro" id="IPR036291">
    <property type="entry name" value="NAD(P)-bd_dom_sf"/>
</dbReference>
<dbReference type="InterPro" id="IPR003148">
    <property type="entry name" value="RCK_N"/>
</dbReference>
<dbReference type="InterPro" id="IPR048735">
    <property type="entry name" value="Slowpoke-like_C"/>
</dbReference>
<dbReference type="PANTHER" id="PTHR10027">
    <property type="entry name" value="CALCIUM-ACTIVATED POTASSIUM CHANNEL ALPHA CHAIN"/>
    <property type="match status" value="1"/>
</dbReference>
<dbReference type="PANTHER" id="PTHR10027:SF33">
    <property type="entry name" value="CALCIUM-ACTIVATED POTASSIUM CHANNEL SUBUNIT ALPHA-1-RELATED"/>
    <property type="match status" value="1"/>
</dbReference>
<dbReference type="Pfam" id="PF03493">
    <property type="entry name" value="BK_channel_a"/>
    <property type="match status" value="1"/>
</dbReference>
<dbReference type="Pfam" id="PF00520">
    <property type="entry name" value="Ion_trans"/>
    <property type="match status" value="1"/>
</dbReference>
<dbReference type="Pfam" id="PF22614">
    <property type="entry name" value="Slo-like_RCK"/>
    <property type="match status" value="2"/>
</dbReference>
<dbReference type="Pfam" id="PF21014">
    <property type="entry name" value="Slowpoke_C"/>
    <property type="match status" value="1"/>
</dbReference>
<dbReference type="PRINTS" id="PR01449">
    <property type="entry name" value="BKCHANNELA"/>
</dbReference>
<dbReference type="PRINTS" id="PR00169">
    <property type="entry name" value="KCHANNEL"/>
</dbReference>
<dbReference type="SUPFAM" id="SSF51735">
    <property type="entry name" value="NAD(P)-binding Rossmann-fold domains"/>
    <property type="match status" value="1"/>
</dbReference>
<dbReference type="SUPFAM" id="SSF81324">
    <property type="entry name" value="Voltage-gated potassium channels"/>
    <property type="match status" value="1"/>
</dbReference>
<dbReference type="PROSITE" id="PS51201">
    <property type="entry name" value="RCK_N"/>
    <property type="match status" value="2"/>
</dbReference>
<evidence type="ECO:0000250" key="1">
    <source>
        <dbReference type="UniProtKB" id="Q08460"/>
    </source>
</evidence>
<evidence type="ECO:0000250" key="2">
    <source>
        <dbReference type="UniProtKB" id="Q12791"/>
    </source>
</evidence>
<evidence type="ECO:0000255" key="3"/>
<evidence type="ECO:0000255" key="4">
    <source>
        <dbReference type="PROSITE-ProRule" id="PRU00543"/>
    </source>
</evidence>
<evidence type="ECO:0000256" key="5">
    <source>
        <dbReference type="SAM" id="MobiDB-lite"/>
    </source>
</evidence>
<evidence type="ECO:0000269" key="6">
    <source>
    </source>
</evidence>
<evidence type="ECO:0000269" key="7">
    <source>
    </source>
</evidence>
<evidence type="ECO:0000303" key="8">
    <source>
    </source>
</evidence>
<evidence type="ECO:0000305" key="9"/>
<evidence type="ECO:0000305" key="10">
    <source>
    </source>
</evidence>
<evidence type="ECO:0000312" key="11">
    <source>
        <dbReference type="Proteomes" id="UP000000437"/>
    </source>
</evidence>
<evidence type="ECO:0000312" key="12">
    <source>
        <dbReference type="ZFIN" id="ZDB-GENE-070202-9"/>
    </source>
</evidence>
<evidence type="ECO:0007744" key="13">
    <source>
        <dbReference type="PDB" id="3U6N"/>
    </source>
</evidence>
<proteinExistence type="evidence at protein level"/>
<feature type="chain" id="PRO_0000458183" description="Calcium-activated potassium channel subunit alpha-1a">
    <location>
        <begin position="1"/>
        <end position="1184"/>
    </location>
</feature>
<feature type="topological domain" description="Extracellular" evidence="9">
    <location>
        <begin position="1"/>
        <end position="39"/>
    </location>
</feature>
<feature type="transmembrane region" description="Helical" evidence="3">
    <location>
        <begin position="40"/>
        <end position="60"/>
    </location>
</feature>
<feature type="topological domain" description="Cytoplasmic" evidence="9">
    <location>
        <begin position="61"/>
        <end position="132"/>
    </location>
</feature>
<feature type="transmembrane region" description="Helical" evidence="3">
    <location>
        <begin position="133"/>
        <end position="153"/>
    </location>
</feature>
<feature type="topological domain" description="Extracellular" evidence="9">
    <location>
        <begin position="154"/>
        <end position="168"/>
    </location>
</feature>
<feature type="transmembrane region" description="Helical" evidence="3">
    <location>
        <begin position="169"/>
        <end position="189"/>
    </location>
</feature>
<feature type="topological domain" description="Cytoplasmic" evidence="9">
    <location>
        <begin position="190"/>
        <end position="193"/>
    </location>
</feature>
<feature type="transmembrane region" description="Helical" evidence="3">
    <location>
        <begin position="194"/>
        <end position="214"/>
    </location>
</feature>
<feature type="topological domain" description="Extracellular" evidence="9">
    <location>
        <begin position="215"/>
        <end position="254"/>
    </location>
</feature>
<feature type="transmembrane region" description="Helical" evidence="3">
    <location>
        <begin position="255"/>
        <end position="275"/>
    </location>
</feature>
<feature type="topological domain" description="Cytoplasmic" evidence="9">
    <location>
        <begin position="276"/>
        <end position="289"/>
    </location>
</feature>
<feature type="transmembrane region" description="Helical" evidence="3">
    <location>
        <begin position="290"/>
        <end position="310"/>
    </location>
</feature>
<feature type="topological domain" description="Extracellular" evidence="9">
    <location>
        <begin position="311"/>
        <end position="321"/>
    </location>
</feature>
<feature type="transmembrane region" description="Helical" evidence="3">
    <location>
        <begin position="322"/>
        <end position="342"/>
    </location>
</feature>
<feature type="topological domain" description="Cytoplasmic" evidence="9">
    <location>
        <begin position="343"/>
        <end position="1184"/>
    </location>
</feature>
<feature type="domain" description="RCK N-terminal 1" evidence="4">
    <location>
        <begin position="361"/>
        <end position="503"/>
    </location>
</feature>
<feature type="domain" description="RCK N-terminal 2" evidence="4">
    <location>
        <begin position="735"/>
        <end position="879"/>
    </location>
</feature>
<feature type="region of interest" description="Disordered" evidence="5">
    <location>
        <begin position="655"/>
        <end position="677"/>
    </location>
</feature>
<feature type="region of interest" description="Disordered" evidence="5">
    <location>
        <begin position="1082"/>
        <end position="1143"/>
    </location>
</feature>
<feature type="short sequence motif" description="Calcium bowl" evidence="8 13">
    <location>
        <begin position="908"/>
        <end position="916"/>
    </location>
</feature>
<feature type="compositionally biased region" description="Low complexity" evidence="5">
    <location>
        <begin position="1084"/>
        <end position="1104"/>
    </location>
</feature>
<feature type="compositionally biased region" description="Basic and acidic residues" evidence="5">
    <location>
        <begin position="1116"/>
        <end position="1125"/>
    </location>
</feature>
<feature type="binding site" evidence="9">
    <location>
        <position position="393"/>
    </location>
    <ligand>
        <name>Mg(2+)</name>
        <dbReference type="ChEBI" id="CHEBI:18420"/>
    </ligand>
</feature>
<feature type="binding site" evidence="9">
    <location>
        <position position="416"/>
    </location>
    <ligand>
        <name>Mg(2+)</name>
        <dbReference type="ChEBI" id="CHEBI:18420"/>
    </ligand>
</feature>
<feature type="binding site" evidence="9">
    <location>
        <position position="418"/>
    </location>
    <ligand>
        <name>Mg(2+)</name>
        <dbReference type="ChEBI" id="CHEBI:18420"/>
    </ligand>
</feature>
<feature type="binding site" evidence="13">
    <location>
        <position position="468"/>
    </location>
    <ligand>
        <name>Ca(2+)</name>
        <dbReference type="ChEBI" id="CHEBI:29108"/>
    </ligand>
</feature>
<feature type="binding site" evidence="6 13">
    <location>
        <position position="908"/>
    </location>
    <ligand>
        <name>Ca(2+)</name>
        <dbReference type="ChEBI" id="CHEBI:29108"/>
    </ligand>
</feature>
<feature type="binding site" evidence="6 13">
    <location>
        <position position="911"/>
    </location>
    <ligand>
        <name>Ca(2+)</name>
        <dbReference type="ChEBI" id="CHEBI:29108"/>
    </ligand>
</feature>
<feature type="binding site" evidence="6 13">
    <location>
        <position position="914"/>
    </location>
    <ligand>
        <name>Ca(2+)</name>
        <dbReference type="ChEBI" id="CHEBI:29108"/>
    </ligand>
</feature>
<feature type="binding site" evidence="6 13">
    <location>
        <position position="916"/>
    </location>
    <ligand>
        <name>Ca(2+)</name>
        <dbReference type="ChEBI" id="CHEBI:29108"/>
    </ligand>
</feature>
<feature type="modified residue" description="Phosphothreonine" evidence="1">
    <location>
        <position position="659"/>
    </location>
</feature>
<feature type="modified residue" description="Phosphoserine" evidence="1">
    <location>
        <position position="661"/>
    </location>
</feature>
<feature type="modified residue" description="Phosphoserine" evidence="1">
    <location>
        <position position="674"/>
    </location>
</feature>
<feature type="modified residue" description="Phosphoserine" evidence="1">
    <location>
        <position position="678"/>
    </location>
</feature>
<feature type="modified residue" description="Phosphothreonine" evidence="1">
    <location>
        <position position="866"/>
    </location>
</feature>
<feature type="modified residue" description="Phosphoserine" evidence="1">
    <location>
        <position position="874"/>
    </location>
</feature>
<feature type="modified residue" description="Phosphoserine" evidence="1">
    <location>
        <position position="878"/>
    </location>
</feature>
<feature type="lipid moiety-binding region" description="S-palmitoyl cysteine" evidence="2">
    <location>
        <position position="71"/>
    </location>
</feature>
<feature type="lipid moiety-binding region" description="S-palmitoyl cysteine" evidence="2">
    <location>
        <position position="72"/>
    </location>
</feature>
<feature type="lipid moiety-binding region" description="S-palmitoyl cysteine" evidence="2">
    <location>
        <position position="74"/>
    </location>
</feature>
<feature type="mutagenesis site" description="Has no effect on channel activation by cytosolic Ca(2+), in vitro." evidence="6">
    <location>
        <begin position="854"/>
        <end position="888"/>
    </location>
</feature>
<feature type="mutagenesis site" description="Has no effect on channel activation by cytosolic Ca(2+), in vitro." evidence="6">
    <location>
        <begin position="1076"/>
        <end position="1184"/>
    </location>
</feature>
<organism evidence="11">
    <name type="scientific">Danio rerio</name>
    <name type="common">Zebrafish</name>
    <name type="synonym">Brachydanio rerio</name>
    <dbReference type="NCBI Taxonomy" id="7955"/>
    <lineage>
        <taxon>Eukaryota</taxon>
        <taxon>Metazoa</taxon>
        <taxon>Chordata</taxon>
        <taxon>Craniata</taxon>
        <taxon>Vertebrata</taxon>
        <taxon>Euteleostomi</taxon>
        <taxon>Actinopterygii</taxon>
        <taxon>Neopterygii</taxon>
        <taxon>Teleostei</taxon>
        <taxon>Ostariophysi</taxon>
        <taxon>Cypriniformes</taxon>
        <taxon>Danionidae</taxon>
        <taxon>Danioninae</taxon>
        <taxon>Danio</taxon>
    </lineage>
</organism>
<keyword id="KW-0002">3D-structure</keyword>
<keyword id="KW-0106">Calcium</keyword>
<keyword id="KW-1003">Cell membrane</keyword>
<keyword id="KW-0407">Ion channel</keyword>
<keyword id="KW-0406">Ion transport</keyword>
<keyword id="KW-0449">Lipoprotein</keyword>
<keyword id="KW-0460">Magnesium</keyword>
<keyword id="KW-0472">Membrane</keyword>
<keyword id="KW-0479">Metal-binding</keyword>
<keyword id="KW-0564">Palmitate</keyword>
<keyword id="KW-0597">Phosphoprotein</keyword>
<keyword id="KW-0630">Potassium</keyword>
<keyword id="KW-0631">Potassium channel</keyword>
<keyword id="KW-0633">Potassium transport</keyword>
<keyword id="KW-1185">Reference proteome</keyword>
<keyword id="KW-0812">Transmembrane</keyword>
<keyword id="KW-1133">Transmembrane helix</keyword>
<keyword id="KW-0813">Transport</keyword>
<keyword id="KW-0851">Voltage-gated channel</keyword>
<sequence length="1184" mass="133326">MSNNINFNKNPDSSVSISKMDVIIPFTPDVPCDNNGQRMWWAFLASSMVTFFGGLFIILLWRTLKYLWTVCCHCNIKNKEAQKVNNPITIQADGTTKTGNEKEEAPASEVGWMTSVKDWAGVMISAQTLTGRVLVVLVFALSIGALGIYFIDSSDPIESCQNFYKDFTLQIDMAFNVFFLLYFGLRFIAANDKLWFWLEVNSVVDFFTVPPVFVSVYLNRSWLGLRFLRALRLIQFSEILQFLNILKTSNSIKLVNLCSIFISTWLTAAGFIHLVENSGDPWENFQNSQPLSYWECVYLLMVTMSTVGYGDVYARTTLGRLFMVFFILGGLAMFASYVPEIIELIGNRKKYGGSYSAVNGRKHIVVCGHITLESVSNFLKDFLHKDRDDVNVEIVFLHNISPNLELEALFKRHFTQVEFYQGSVLNPHDLARVKIESADACLILANKYCADPDAEDASNIMRVISIKNYHPKIRIITQMLQYHNKAHLLNIPSWNWKEGDDAICLAELKAGFIAQSCLAQGLSTMLANLFSMRSYIKIEEDTWQKYYLEGVANEMYTEYLSSAFVGLSFPTVCELCYVKLKLLLIAIEYKSEQRESSILINPGNHVKMQEGTLGFFIASDAKEVKRAFFYCKACHDDITDPKRIKKCGCKRIEDEHPSTLSPKKKQRNGGMRNSPNCSPKMMRHDPLLIPGNEQIESMDANVKRYDSTGMFHWCPSKEIEKVILTRSEASMTVLSGHVVVCIFGDVTSALVGLRNLVMPLRASNFHYHELKPIVFVGSLDYLRREWETLHNFPKVFILPGTPLSRADLRAVNINLCDMCVILSANQNNIDDASLQDKECILASLNIKSMQFDDSIGVLQANSQGFTPPGMDRSSPDNSPVHGLVRQASVTTGSNIPIITELVNDSNVQFLDQDDDDDPDTELYLTQPFACGTAFAVSVLDSLMSATYFNDNILTLIRTLVTGGATPELEALLAEENALRGGYSTPQTLANRDRCRVAQLALYDGPFADLGDGGCYGDLFCKALKTYNMLCFGIYRLRDAHLGAPSQCTKRYVITNPPYEFEMVPTDLIFCLMQFDHNAGQSRASLSHSSHSSHSSSKKSSSVHSIPATNRQNRSSKAREARDKQNATRMNRMGPEKRWFTDEAENAYPRNIQIKPMSTHMANQVNQYKSTSSLIPPIREVEDEC</sequence>